<accession>A1TL06</accession>
<proteinExistence type="inferred from homology"/>
<keyword id="KW-0028">Amino-acid biosynthesis</keyword>
<keyword id="KW-0963">Cytoplasm</keyword>
<keyword id="KW-0368">Histidine biosynthesis</keyword>
<keyword id="KW-0456">Lyase</keyword>
<dbReference type="EC" id="4.3.2.10" evidence="1"/>
<dbReference type="EMBL" id="CP000512">
    <property type="protein sequence ID" value="ABM31644.1"/>
    <property type="molecule type" value="Genomic_DNA"/>
</dbReference>
<dbReference type="RefSeq" id="WP_011794202.1">
    <property type="nucleotide sequence ID" value="NC_008752.1"/>
</dbReference>
<dbReference type="SMR" id="A1TL06"/>
<dbReference type="STRING" id="397945.Aave_1047"/>
<dbReference type="GeneID" id="79790702"/>
<dbReference type="KEGG" id="aav:Aave_1047"/>
<dbReference type="eggNOG" id="COG0107">
    <property type="taxonomic scope" value="Bacteria"/>
</dbReference>
<dbReference type="HOGENOM" id="CLU_048577_4_0_4"/>
<dbReference type="OrthoDB" id="9781903at2"/>
<dbReference type="UniPathway" id="UPA00031">
    <property type="reaction ID" value="UER00010"/>
</dbReference>
<dbReference type="Proteomes" id="UP000002596">
    <property type="component" value="Chromosome"/>
</dbReference>
<dbReference type="GO" id="GO:0005737">
    <property type="term" value="C:cytoplasm"/>
    <property type="evidence" value="ECO:0007669"/>
    <property type="project" value="UniProtKB-SubCell"/>
</dbReference>
<dbReference type="GO" id="GO:0000107">
    <property type="term" value="F:imidazoleglycerol-phosphate synthase activity"/>
    <property type="evidence" value="ECO:0007669"/>
    <property type="project" value="UniProtKB-UniRule"/>
</dbReference>
<dbReference type="GO" id="GO:0016829">
    <property type="term" value="F:lyase activity"/>
    <property type="evidence" value="ECO:0007669"/>
    <property type="project" value="UniProtKB-KW"/>
</dbReference>
<dbReference type="GO" id="GO:0000105">
    <property type="term" value="P:L-histidine biosynthetic process"/>
    <property type="evidence" value="ECO:0007669"/>
    <property type="project" value="UniProtKB-UniRule"/>
</dbReference>
<dbReference type="CDD" id="cd04731">
    <property type="entry name" value="HisF"/>
    <property type="match status" value="1"/>
</dbReference>
<dbReference type="FunFam" id="3.20.20.70:FF:000006">
    <property type="entry name" value="Imidazole glycerol phosphate synthase subunit HisF"/>
    <property type="match status" value="1"/>
</dbReference>
<dbReference type="Gene3D" id="3.20.20.70">
    <property type="entry name" value="Aldolase class I"/>
    <property type="match status" value="1"/>
</dbReference>
<dbReference type="HAMAP" id="MF_01013">
    <property type="entry name" value="HisF"/>
    <property type="match status" value="1"/>
</dbReference>
<dbReference type="InterPro" id="IPR013785">
    <property type="entry name" value="Aldolase_TIM"/>
</dbReference>
<dbReference type="InterPro" id="IPR006062">
    <property type="entry name" value="His_biosynth"/>
</dbReference>
<dbReference type="InterPro" id="IPR004651">
    <property type="entry name" value="HisF"/>
</dbReference>
<dbReference type="InterPro" id="IPR050064">
    <property type="entry name" value="IGPS_HisA/HisF"/>
</dbReference>
<dbReference type="InterPro" id="IPR011060">
    <property type="entry name" value="RibuloseP-bd_barrel"/>
</dbReference>
<dbReference type="NCBIfam" id="TIGR00735">
    <property type="entry name" value="hisF"/>
    <property type="match status" value="1"/>
</dbReference>
<dbReference type="PANTHER" id="PTHR21235:SF2">
    <property type="entry name" value="IMIDAZOLE GLYCEROL PHOSPHATE SYNTHASE HISHF"/>
    <property type="match status" value="1"/>
</dbReference>
<dbReference type="PANTHER" id="PTHR21235">
    <property type="entry name" value="IMIDAZOLE GLYCEROL PHOSPHATE SYNTHASE SUBUNIT HISF/H IGP SYNTHASE SUBUNIT HISF/H"/>
    <property type="match status" value="1"/>
</dbReference>
<dbReference type="Pfam" id="PF00977">
    <property type="entry name" value="His_biosynth"/>
    <property type="match status" value="1"/>
</dbReference>
<dbReference type="SUPFAM" id="SSF51366">
    <property type="entry name" value="Ribulose-phoshate binding barrel"/>
    <property type="match status" value="1"/>
</dbReference>
<reference key="1">
    <citation type="submission" date="2006-12" db="EMBL/GenBank/DDBJ databases">
        <title>Complete sequence of Acidovorax avenae subsp. citrulli AAC00-1.</title>
        <authorList>
            <person name="Copeland A."/>
            <person name="Lucas S."/>
            <person name="Lapidus A."/>
            <person name="Barry K."/>
            <person name="Detter J.C."/>
            <person name="Glavina del Rio T."/>
            <person name="Dalin E."/>
            <person name="Tice H."/>
            <person name="Pitluck S."/>
            <person name="Kiss H."/>
            <person name="Brettin T."/>
            <person name="Bruce D."/>
            <person name="Han C."/>
            <person name="Tapia R."/>
            <person name="Gilna P."/>
            <person name="Schmutz J."/>
            <person name="Larimer F."/>
            <person name="Land M."/>
            <person name="Hauser L."/>
            <person name="Kyrpides N."/>
            <person name="Kim E."/>
            <person name="Stahl D."/>
            <person name="Richardson P."/>
        </authorList>
    </citation>
    <scope>NUCLEOTIDE SEQUENCE [LARGE SCALE GENOMIC DNA]</scope>
    <source>
        <strain>AAC00-1</strain>
    </source>
</reference>
<comment type="function">
    <text evidence="1">IGPS catalyzes the conversion of PRFAR and glutamine to IGP, AICAR and glutamate. The HisF subunit catalyzes the cyclization activity that produces IGP and AICAR from PRFAR using the ammonia provided by the HisH subunit.</text>
</comment>
<comment type="catalytic activity">
    <reaction evidence="1">
        <text>5-[(5-phospho-1-deoxy-D-ribulos-1-ylimino)methylamino]-1-(5-phospho-beta-D-ribosyl)imidazole-4-carboxamide + L-glutamine = D-erythro-1-(imidazol-4-yl)glycerol 3-phosphate + 5-amino-1-(5-phospho-beta-D-ribosyl)imidazole-4-carboxamide + L-glutamate + H(+)</text>
        <dbReference type="Rhea" id="RHEA:24793"/>
        <dbReference type="ChEBI" id="CHEBI:15378"/>
        <dbReference type="ChEBI" id="CHEBI:29985"/>
        <dbReference type="ChEBI" id="CHEBI:58278"/>
        <dbReference type="ChEBI" id="CHEBI:58359"/>
        <dbReference type="ChEBI" id="CHEBI:58475"/>
        <dbReference type="ChEBI" id="CHEBI:58525"/>
        <dbReference type="EC" id="4.3.2.10"/>
    </reaction>
</comment>
<comment type="pathway">
    <text evidence="1">Amino-acid biosynthesis; L-histidine biosynthesis; L-histidine from 5-phospho-alpha-D-ribose 1-diphosphate: step 5/9.</text>
</comment>
<comment type="subunit">
    <text evidence="1">Heterodimer of HisH and HisF.</text>
</comment>
<comment type="subcellular location">
    <subcellularLocation>
        <location evidence="1">Cytoplasm</location>
    </subcellularLocation>
</comment>
<comment type="similarity">
    <text evidence="1">Belongs to the HisA/HisF family.</text>
</comment>
<gene>
    <name evidence="1" type="primary">hisF</name>
    <name type="ordered locus">Aave_1047</name>
</gene>
<protein>
    <recommendedName>
        <fullName evidence="1">Imidazole glycerol phosphate synthase subunit HisF</fullName>
        <ecNumber evidence="1">4.3.2.10</ecNumber>
    </recommendedName>
    <alternativeName>
        <fullName evidence="1">IGP synthase cyclase subunit</fullName>
    </alternativeName>
    <alternativeName>
        <fullName evidence="1">IGP synthase subunit HisF</fullName>
    </alternativeName>
    <alternativeName>
        <fullName evidence="1">ImGP synthase subunit HisF</fullName>
        <shortName evidence="1">IGPS subunit HisF</shortName>
    </alternativeName>
</protein>
<sequence length="266" mass="27684">MLAKRIIPCLDVTGGRVVKGVNFLELRDAGDPVEIAARYNGQGADELTFLDITATSDGRDLILPIIEAVASQVFIPLTVGGGVRTVEDVRRLLNAGADKTSFNSAAIANPEVIDAASAKYGAQCIVVAIDAKRRTPEEAARPGPDGAPRGEGWDVYSHGGRKNTGLDAVQWAAEMARRGAGEILLTSMDRDGTKSGFDLALTRAVSDAVSVPVIASGGVGGLDDLADGVQQGGADAVLAASIFHYGEYTVAQAKERMAARGIPVRL</sequence>
<organism>
    <name type="scientific">Paracidovorax citrulli (strain AAC00-1)</name>
    <name type="common">Acidovorax citrulli</name>
    <dbReference type="NCBI Taxonomy" id="397945"/>
    <lineage>
        <taxon>Bacteria</taxon>
        <taxon>Pseudomonadati</taxon>
        <taxon>Pseudomonadota</taxon>
        <taxon>Betaproteobacteria</taxon>
        <taxon>Burkholderiales</taxon>
        <taxon>Comamonadaceae</taxon>
        <taxon>Paracidovorax</taxon>
    </lineage>
</organism>
<name>HIS6_PARC0</name>
<feature type="chain" id="PRO_1000063012" description="Imidazole glycerol phosphate synthase subunit HisF">
    <location>
        <begin position="1"/>
        <end position="266"/>
    </location>
</feature>
<feature type="region of interest" description="Disordered" evidence="2">
    <location>
        <begin position="134"/>
        <end position="157"/>
    </location>
</feature>
<feature type="active site" evidence="1">
    <location>
        <position position="11"/>
    </location>
</feature>
<feature type="active site" evidence="1">
    <location>
        <position position="130"/>
    </location>
</feature>
<evidence type="ECO:0000255" key="1">
    <source>
        <dbReference type="HAMAP-Rule" id="MF_01013"/>
    </source>
</evidence>
<evidence type="ECO:0000256" key="2">
    <source>
        <dbReference type="SAM" id="MobiDB-lite"/>
    </source>
</evidence>